<protein>
    <recommendedName>
        <fullName evidence="2">Cystinosin homolog</fullName>
    </recommendedName>
</protein>
<proteinExistence type="inferred from homology"/>
<sequence>MKLPVSILFFISVSQILAFNNVIVTQKEVEIGVGETASITFQIKNHTSSTLNQTRIQLSQSPYITNPDVVLVDNWWANVTVSGERPVAGEILEALNCTTDGEEVCSLDLLDAYSRITVIRSHWLAILIQIVGWTYFAAWSVSFYPQMYLNFKRKSVVGLNFDFLSLNLVGFGAYAMFNLLMYYNSHVKNIYSMENPRSPPPVLLNDVVFAVHAFLACFVTILQCIFYERDQQRISTKCIILIIGLVSFGFVSVVVTVLNKITILDFVVSLSYIKMAVTCCKYFPQAYFNYQRKSTVGWSIGNILLDFTGGSLDILQMVLQAINVNDWSAFYANPVKFGLGFVSIFFDIIFMIQHYALYPDAEVPHNEYHGVDNPDPDSIVRDAEHGAADNESMESTDPIIVHD</sequence>
<comment type="function">
    <text evidence="1 2">Cystine/H(+) symporter that mediates export of cystine, the oxidized dimer of cysteine, from lysosomes (By similarity). May play a role in the degradation of engulfed apoptotic cells (By similarity).</text>
</comment>
<comment type="catalytic activity">
    <reaction evidence="1">
        <text>L-cystine(out) + H(+)(out) = L-cystine(in) + H(+)(in)</text>
        <dbReference type="Rhea" id="RHEA:66172"/>
        <dbReference type="ChEBI" id="CHEBI:15378"/>
        <dbReference type="ChEBI" id="CHEBI:35491"/>
    </reaction>
    <physiologicalReaction direction="left-to-right" evidence="1">
        <dbReference type="Rhea" id="RHEA:66173"/>
    </physiologicalReaction>
</comment>
<comment type="subcellular location">
    <subcellularLocation>
        <location evidence="2">Lysosome membrane</location>
        <topology evidence="2">Multi-pass membrane protein</topology>
    </subcellularLocation>
    <subcellularLocation>
        <location evidence="2">Cytoplasmic vesicle</location>
        <location evidence="2">Phagosome</location>
    </subcellularLocation>
    <text evidence="2">During degradation of apoptotic cells when lysosomes fuse to phagosomes, located to phagosomal surfaces until the cell corpse is fully degraded.</text>
</comment>
<comment type="similarity">
    <text evidence="3">Belongs to the cystinosin family.</text>
</comment>
<organism>
    <name type="scientific">Caenorhabditis briggsae</name>
    <dbReference type="NCBI Taxonomy" id="6238"/>
    <lineage>
        <taxon>Eukaryota</taxon>
        <taxon>Metazoa</taxon>
        <taxon>Ecdysozoa</taxon>
        <taxon>Nematoda</taxon>
        <taxon>Chromadorea</taxon>
        <taxon>Rhabditida</taxon>
        <taxon>Rhabditina</taxon>
        <taxon>Rhabditomorpha</taxon>
        <taxon>Rhabditoidea</taxon>
        <taxon>Rhabditidae</taxon>
        <taxon>Peloderinae</taxon>
        <taxon>Caenorhabditis</taxon>
    </lineage>
</organism>
<keyword id="KW-0968">Cytoplasmic vesicle</keyword>
<keyword id="KW-0325">Glycoprotein</keyword>
<keyword id="KW-0458">Lysosome</keyword>
<keyword id="KW-0472">Membrane</keyword>
<keyword id="KW-1185">Reference proteome</keyword>
<keyword id="KW-0677">Repeat</keyword>
<keyword id="KW-0769">Symport</keyword>
<keyword id="KW-0812">Transmembrane</keyword>
<keyword id="KW-1133">Transmembrane helix</keyword>
<keyword id="KW-0813">Transport</keyword>
<name>CTNS_CAEBR</name>
<feature type="chain" id="PRO_0000355035" description="Cystinosin homolog">
    <location>
        <begin position="1"/>
        <end position="403"/>
    </location>
</feature>
<feature type="topological domain" description="Lumenal" evidence="3">
    <location>
        <begin position="1"/>
        <end position="122"/>
    </location>
</feature>
<feature type="transmembrane region" description="Helical" evidence="3">
    <location>
        <begin position="123"/>
        <end position="143"/>
    </location>
</feature>
<feature type="topological domain" description="Cytoplasmic" evidence="3">
    <location>
        <begin position="144"/>
        <end position="162"/>
    </location>
</feature>
<feature type="transmembrane region" description="Helical" evidence="3">
    <location>
        <begin position="163"/>
        <end position="183"/>
    </location>
</feature>
<feature type="topological domain" description="Lumenal" evidence="3">
    <location>
        <begin position="184"/>
        <end position="206"/>
    </location>
</feature>
<feature type="transmembrane region" description="Helical" evidence="3">
    <location>
        <begin position="207"/>
        <end position="227"/>
    </location>
</feature>
<feature type="topological domain" description="Cytoplasmic" evidence="3">
    <location>
        <begin position="228"/>
        <end position="237"/>
    </location>
</feature>
<feature type="transmembrane region" description="Helical" evidence="3">
    <location>
        <begin position="238"/>
        <end position="258"/>
    </location>
</feature>
<feature type="topological domain" description="Lumenal" evidence="3">
    <location>
        <begin position="259"/>
        <end position="260"/>
    </location>
</feature>
<feature type="transmembrane region" description="Helical" evidence="3">
    <location>
        <begin position="261"/>
        <end position="283"/>
    </location>
</feature>
<feature type="topological domain" description="Cytoplasmic" evidence="3">
    <location>
        <begin position="284"/>
        <end position="294"/>
    </location>
</feature>
<feature type="transmembrane region" description="Helical" evidence="3">
    <location>
        <begin position="295"/>
        <end position="315"/>
    </location>
</feature>
<feature type="topological domain" description="Lumenal" evidence="3">
    <location>
        <begin position="316"/>
        <end position="336"/>
    </location>
</feature>
<feature type="transmembrane region" description="Helical" evidence="3">
    <location>
        <begin position="337"/>
        <end position="357"/>
    </location>
</feature>
<feature type="topological domain" description="Cytoplasmic" evidence="3">
    <location>
        <begin position="358"/>
        <end position="403"/>
    </location>
</feature>
<feature type="domain" description="PQ-loop 1" evidence="3">
    <location>
        <begin position="124"/>
        <end position="190"/>
    </location>
</feature>
<feature type="domain" description="PQ-loop 2" evidence="3">
    <location>
        <begin position="266"/>
        <end position="326"/>
    </location>
</feature>
<feature type="region of interest" description="Disordered" evidence="4">
    <location>
        <begin position="374"/>
        <end position="403"/>
    </location>
</feature>
<feature type="compositionally biased region" description="Basic and acidic residues" evidence="4">
    <location>
        <begin position="374"/>
        <end position="388"/>
    </location>
</feature>
<feature type="glycosylation site" description="N-linked (GlcNAc...) asparagine" evidence="3">
    <location>
        <position position="45"/>
    </location>
</feature>
<feature type="glycosylation site" description="N-linked (GlcNAc...) asparagine" evidence="3">
    <location>
        <position position="52"/>
    </location>
</feature>
<feature type="glycosylation site" description="N-linked (GlcNAc...) asparagine" evidence="3">
    <location>
        <position position="78"/>
    </location>
</feature>
<feature type="glycosylation site" description="N-linked (GlcNAc...) asparagine" evidence="3">
    <location>
        <position position="96"/>
    </location>
</feature>
<evidence type="ECO:0000250" key="1">
    <source>
        <dbReference type="UniProtKB" id="O60931"/>
    </source>
</evidence>
<evidence type="ECO:0000250" key="2">
    <source>
        <dbReference type="UniProtKB" id="Q09500"/>
    </source>
</evidence>
<evidence type="ECO:0000255" key="3"/>
<evidence type="ECO:0000256" key="4">
    <source>
        <dbReference type="SAM" id="MobiDB-lite"/>
    </source>
</evidence>
<reference key="1">
    <citation type="journal article" date="2003" name="PLoS Biol.">
        <title>The genome sequence of Caenorhabditis briggsae: a platform for comparative genomics.</title>
        <authorList>
            <person name="Stein L.D."/>
            <person name="Bao Z."/>
            <person name="Blasiar D."/>
            <person name="Blumenthal T."/>
            <person name="Brent M.R."/>
            <person name="Chen N."/>
            <person name="Chinwalla A."/>
            <person name="Clarke L."/>
            <person name="Clee C."/>
            <person name="Coghlan A."/>
            <person name="Coulson A."/>
            <person name="D'Eustachio P."/>
            <person name="Fitch D.H.A."/>
            <person name="Fulton L.A."/>
            <person name="Fulton R.E."/>
            <person name="Griffiths-Jones S."/>
            <person name="Harris T.W."/>
            <person name="Hillier L.W."/>
            <person name="Kamath R."/>
            <person name="Kuwabara P.E."/>
            <person name="Mardis E.R."/>
            <person name="Marra M.A."/>
            <person name="Miner T.L."/>
            <person name="Minx P."/>
            <person name="Mullikin J.C."/>
            <person name="Plumb R.W."/>
            <person name="Rogers J."/>
            <person name="Schein J.E."/>
            <person name="Sohrmann M."/>
            <person name="Spieth J."/>
            <person name="Stajich J.E."/>
            <person name="Wei C."/>
            <person name="Willey D."/>
            <person name="Wilson R.K."/>
            <person name="Durbin R.M."/>
            <person name="Waterston R.H."/>
        </authorList>
    </citation>
    <scope>NUCLEOTIDE SEQUENCE [LARGE SCALE GENOMIC DNA]</scope>
    <source>
        <strain>AF16</strain>
    </source>
</reference>
<accession>A8WN56</accession>
<dbReference type="EMBL" id="HE600999">
    <property type="protein sequence ID" value="CAP21911.3"/>
    <property type="molecule type" value="Genomic_DNA"/>
</dbReference>
<dbReference type="SMR" id="A8WN56"/>
<dbReference type="FunCoup" id="A8WN56">
    <property type="interactions" value="1987"/>
</dbReference>
<dbReference type="STRING" id="6238.A8WN56"/>
<dbReference type="GlyCosmos" id="A8WN56">
    <property type="glycosylation" value="4 sites, No reported glycans"/>
</dbReference>
<dbReference type="EnsemblMetazoa" id="CBG00747a.1">
    <property type="protein sequence ID" value="CBG00747a.1"/>
    <property type="gene ID" value="WBGene00024090"/>
</dbReference>
<dbReference type="KEGG" id="cbr:CBG_00747"/>
<dbReference type="CTD" id="8571826"/>
<dbReference type="WormBase" id="CBG00747a">
    <property type="protein sequence ID" value="CBP05802"/>
    <property type="gene ID" value="WBGene00024090"/>
    <property type="gene designation" value="Cbr-ctns-1"/>
</dbReference>
<dbReference type="eggNOG" id="KOG3145">
    <property type="taxonomic scope" value="Eukaryota"/>
</dbReference>
<dbReference type="HOGENOM" id="CLU_046327_1_0_1"/>
<dbReference type="InParanoid" id="A8WN56"/>
<dbReference type="OMA" id="ASWEWID"/>
<dbReference type="Proteomes" id="UP000008549">
    <property type="component" value="Unassembled WGS sequence"/>
</dbReference>
<dbReference type="GO" id="GO:0005765">
    <property type="term" value="C:lysosomal membrane"/>
    <property type="evidence" value="ECO:0000318"/>
    <property type="project" value="GO_Central"/>
</dbReference>
<dbReference type="GO" id="GO:0005764">
    <property type="term" value="C:lysosome"/>
    <property type="evidence" value="ECO:0000250"/>
    <property type="project" value="UniProtKB"/>
</dbReference>
<dbReference type="GO" id="GO:0045335">
    <property type="term" value="C:phagocytic vesicle"/>
    <property type="evidence" value="ECO:0007669"/>
    <property type="project" value="UniProtKB-SubCell"/>
</dbReference>
<dbReference type="GO" id="GO:0015184">
    <property type="term" value="F:L-cystine transmembrane transporter activity"/>
    <property type="evidence" value="ECO:0000318"/>
    <property type="project" value="GO_Central"/>
</dbReference>
<dbReference type="GO" id="GO:0015293">
    <property type="term" value="F:symporter activity"/>
    <property type="evidence" value="ECO:0007669"/>
    <property type="project" value="UniProtKB-KW"/>
</dbReference>
<dbReference type="GO" id="GO:0015811">
    <property type="term" value="P:L-cystine transport"/>
    <property type="evidence" value="ECO:0000318"/>
    <property type="project" value="GO_Central"/>
</dbReference>
<dbReference type="GO" id="GO:0007040">
    <property type="term" value="P:lysosome organization"/>
    <property type="evidence" value="ECO:0007669"/>
    <property type="project" value="EnsemblMetazoa"/>
</dbReference>
<dbReference type="GO" id="GO:0006909">
    <property type="term" value="P:phagocytosis"/>
    <property type="evidence" value="ECO:0000250"/>
    <property type="project" value="UniProtKB"/>
</dbReference>
<dbReference type="FunFam" id="1.20.1280.290:FF:000016">
    <property type="entry name" value="Cystinosin homolog"/>
    <property type="match status" value="1"/>
</dbReference>
<dbReference type="FunFam" id="1.20.1280.290:FF:000023">
    <property type="entry name" value="Cystinosin homolog"/>
    <property type="match status" value="1"/>
</dbReference>
<dbReference type="Gene3D" id="1.20.1280.290">
    <property type="match status" value="2"/>
</dbReference>
<dbReference type="InterPro" id="IPR005282">
    <property type="entry name" value="LC_transporter"/>
</dbReference>
<dbReference type="InterPro" id="IPR006603">
    <property type="entry name" value="PQ-loop_rpt"/>
</dbReference>
<dbReference type="NCBIfam" id="TIGR00951">
    <property type="entry name" value="2A43"/>
    <property type="match status" value="1"/>
</dbReference>
<dbReference type="PANTHER" id="PTHR13131">
    <property type="entry name" value="CYSTINOSIN"/>
    <property type="match status" value="1"/>
</dbReference>
<dbReference type="PANTHER" id="PTHR13131:SF5">
    <property type="entry name" value="CYSTINOSIN"/>
    <property type="match status" value="1"/>
</dbReference>
<dbReference type="Pfam" id="PF04193">
    <property type="entry name" value="PQ-loop"/>
    <property type="match status" value="2"/>
</dbReference>
<dbReference type="SMART" id="SM00679">
    <property type="entry name" value="CTNS"/>
    <property type="match status" value="2"/>
</dbReference>
<gene>
    <name type="primary">ctns-1</name>
    <name type="ORF">CBG00747</name>
</gene>